<name>RUBR_PYRAB</name>
<feature type="chain" id="PRO_0000135062" description="Rubredoxin">
    <location>
        <begin position="1"/>
        <end position="53"/>
    </location>
</feature>
<feature type="domain" description="Rubredoxin-like" evidence="2">
    <location>
        <begin position="1"/>
        <end position="52"/>
    </location>
</feature>
<feature type="binding site" evidence="2 3">
    <location>
        <position position="6"/>
    </location>
    <ligand>
        <name>Fe cation</name>
        <dbReference type="ChEBI" id="CHEBI:24875"/>
    </ligand>
</feature>
<feature type="binding site" evidence="2 3">
    <location>
        <position position="9"/>
    </location>
    <ligand>
        <name>Fe cation</name>
        <dbReference type="ChEBI" id="CHEBI:24875"/>
    </ligand>
</feature>
<feature type="binding site" evidence="2 3">
    <location>
        <position position="39"/>
    </location>
    <ligand>
        <name>Fe cation</name>
        <dbReference type="ChEBI" id="CHEBI:24875"/>
    </ligand>
</feature>
<feature type="binding site" evidence="2 3">
    <location>
        <position position="42"/>
    </location>
    <ligand>
        <name>Fe cation</name>
        <dbReference type="ChEBI" id="CHEBI:24875"/>
    </ligand>
</feature>
<feature type="strand" evidence="5">
    <location>
        <begin position="3"/>
        <end position="10"/>
    </location>
</feature>
<feature type="strand" evidence="5">
    <location>
        <begin position="12"/>
        <end position="14"/>
    </location>
</feature>
<feature type="turn" evidence="5">
    <location>
        <begin position="15"/>
        <end position="17"/>
    </location>
</feature>
<feature type="helix" evidence="5">
    <location>
        <begin position="20"/>
        <end position="22"/>
    </location>
</feature>
<feature type="helix" evidence="5">
    <location>
        <begin position="30"/>
        <end position="32"/>
    </location>
</feature>
<feature type="turn" evidence="5">
    <location>
        <begin position="40"/>
        <end position="42"/>
    </location>
</feature>
<feature type="helix" evidence="5">
    <location>
        <begin position="46"/>
        <end position="48"/>
    </location>
</feature>
<feature type="strand" evidence="5">
    <location>
        <begin position="49"/>
        <end position="52"/>
    </location>
</feature>
<gene>
    <name type="primary">rub</name>
    <name type="synonym">rd</name>
    <name type="ordered locus">PYRAB08920</name>
    <name type="ORF">PAB7224</name>
</gene>
<reference key="1">
    <citation type="journal article" date="2003" name="Mol. Microbiol.">
        <title>An integrated analysis of the genome of the hyperthermophilic archaeon Pyrococcus abyssi.</title>
        <authorList>
            <person name="Cohen G.N."/>
            <person name="Barbe V."/>
            <person name="Flament D."/>
            <person name="Galperin M."/>
            <person name="Heilig R."/>
            <person name="Lecompte O."/>
            <person name="Poch O."/>
            <person name="Prieur D."/>
            <person name="Querellou J."/>
            <person name="Ripp R."/>
            <person name="Thierry J.-C."/>
            <person name="Van der Oost J."/>
            <person name="Weissenbach J."/>
            <person name="Zivanovic Y."/>
            <person name="Forterre P."/>
        </authorList>
    </citation>
    <scope>NUCLEOTIDE SEQUENCE [LARGE SCALE GENOMIC DNA]</scope>
    <source>
        <strain>GE5 / Orsay</strain>
    </source>
</reference>
<reference key="2">
    <citation type="journal article" date="2012" name="Curr. Microbiol.">
        <title>Re-annotation of two hyperthermophilic archaea Pyrococcus abyssi GE5 and Pyrococcus furiosus DSM 3638.</title>
        <authorList>
            <person name="Gao J."/>
            <person name="Wang J."/>
        </authorList>
    </citation>
    <scope>GENOME REANNOTATION</scope>
    <source>
        <strain>GE5 / Orsay</strain>
    </source>
</reference>
<reference key="3">
    <citation type="journal article" date="2004" name="Hyperfine Interact.">
        <title>Iron-sulfur proteins investigated by EPR-, Moessbauer- and EXAFS-spectroscopy.</title>
        <authorList>
            <person name="Wegner P."/>
            <person name="Bever M."/>
            <person name="Schuenemann V."/>
            <person name="Trautwein A.X."/>
            <person name="Schmidt C."/>
            <person name="Boenisch H."/>
            <person name="Gnida M."/>
            <person name="Meyer-Klaucke W."/>
        </authorList>
    </citation>
    <scope>STUDY OF IRON-SULFUR CENTERS</scope>
</reference>
<reference key="4">
    <citation type="journal article" date="2005" name="Acta Crystallogr. D">
        <title>Ultrahigh-resolution study on Pyrococcus abyssi rubredoxin. I. 0.69 A X-ray structure of mutant W4L/R5S.</title>
        <authorList>
            <person name="Boenisch H."/>
            <person name="Schmidt C.L."/>
            <person name="Bianco P."/>
            <person name="Ladenstein R."/>
        </authorList>
    </citation>
    <scope>X-RAY CRYSTALLOGRAPHY (0.69 ANGSTROMS) IN COMPLEX WITH IRON</scope>
</reference>
<accession>Q9V099</accession>
<accession>G8ZI58</accession>
<proteinExistence type="evidence at protein level"/>
<keyword id="KW-0002">3D-structure</keyword>
<keyword id="KW-0249">Electron transport</keyword>
<keyword id="KW-0408">Iron</keyword>
<keyword id="KW-0479">Metal-binding</keyword>
<keyword id="KW-0813">Transport</keyword>
<organism>
    <name type="scientific">Pyrococcus abyssi (strain GE5 / Orsay)</name>
    <dbReference type="NCBI Taxonomy" id="272844"/>
    <lineage>
        <taxon>Archaea</taxon>
        <taxon>Methanobacteriati</taxon>
        <taxon>Methanobacteriota</taxon>
        <taxon>Thermococci</taxon>
        <taxon>Thermococcales</taxon>
        <taxon>Thermococcaceae</taxon>
        <taxon>Pyrococcus</taxon>
    </lineage>
</organism>
<comment type="function">
    <text evidence="1">Rubredoxin is a small nonheme, iron protein lacking acid-labile sulfide. Its single Fe, chelated to 4 Cys, functions as an electron acceptor and may also stabilize the conformation of the molecule (By similarity).</text>
</comment>
<comment type="cofactor">
    <cofactor>
        <name>Fe(3+)</name>
        <dbReference type="ChEBI" id="CHEBI:29034"/>
    </cofactor>
    <text>Binds 1 Fe(3+) ion per subunit.</text>
</comment>
<comment type="similarity">
    <text evidence="4">Belongs to the rubredoxin family.</text>
</comment>
<protein>
    <recommendedName>
        <fullName>Rubredoxin</fullName>
        <shortName>Rd</shortName>
    </recommendedName>
</protein>
<sequence>MAKWRCKICGYIYDEDEGDPDNGISPGTKFEDLPDDWVCPLCGAPKSEFERIE</sequence>
<dbReference type="EMBL" id="AJ248285">
    <property type="protein sequence ID" value="CAB49806.1"/>
    <property type="molecule type" value="Genomic_DNA"/>
</dbReference>
<dbReference type="EMBL" id="HE613800">
    <property type="protein sequence ID" value="CCE70299.1"/>
    <property type="molecule type" value="Genomic_DNA"/>
</dbReference>
<dbReference type="PIR" id="E75136">
    <property type="entry name" value="E75136"/>
</dbReference>
<dbReference type="RefSeq" id="WP_010868015.1">
    <property type="nucleotide sequence ID" value="NC_000868.1"/>
</dbReference>
<dbReference type="PDB" id="1YK4">
    <property type="method" value="X-ray"/>
    <property type="resolution" value="0.69 A"/>
    <property type="chains" value="A=2-53"/>
</dbReference>
<dbReference type="PDB" id="1YK5">
    <property type="method" value="X-ray"/>
    <property type="resolution" value="1.79 A"/>
    <property type="chains" value="A/B/C/D=1-53"/>
</dbReference>
<dbReference type="PDB" id="2PYA">
    <property type="method" value="X-ray"/>
    <property type="resolution" value="0.86 A"/>
    <property type="chains" value="A=2-53"/>
</dbReference>
<dbReference type="PDBsum" id="1YK4"/>
<dbReference type="PDBsum" id="1YK5"/>
<dbReference type="PDBsum" id="2PYA"/>
<dbReference type="SMR" id="Q9V099"/>
<dbReference type="STRING" id="272844.PAB7224"/>
<dbReference type="KEGG" id="pab:PAB7224"/>
<dbReference type="PATRIC" id="fig|272844.11.peg.944"/>
<dbReference type="eggNOG" id="arCOG04391">
    <property type="taxonomic scope" value="Archaea"/>
</dbReference>
<dbReference type="HOGENOM" id="CLU_128747_3_3_2"/>
<dbReference type="OrthoDB" id="371635at2157"/>
<dbReference type="PhylomeDB" id="Q9V099"/>
<dbReference type="EvolutionaryTrace" id="Q9V099"/>
<dbReference type="Proteomes" id="UP000000810">
    <property type="component" value="Chromosome"/>
</dbReference>
<dbReference type="Proteomes" id="UP000009139">
    <property type="component" value="Chromosome"/>
</dbReference>
<dbReference type="GO" id="GO:0009055">
    <property type="term" value="F:electron transfer activity"/>
    <property type="evidence" value="ECO:0007669"/>
    <property type="project" value="InterPro"/>
</dbReference>
<dbReference type="GO" id="GO:0005506">
    <property type="term" value="F:iron ion binding"/>
    <property type="evidence" value="ECO:0007669"/>
    <property type="project" value="InterPro"/>
</dbReference>
<dbReference type="GO" id="GO:0043448">
    <property type="term" value="P:alkane catabolic process"/>
    <property type="evidence" value="ECO:0007669"/>
    <property type="project" value="TreeGrafter"/>
</dbReference>
<dbReference type="CDD" id="cd00730">
    <property type="entry name" value="rubredoxin"/>
    <property type="match status" value="1"/>
</dbReference>
<dbReference type="FunFam" id="2.20.28.10:FF:000001">
    <property type="entry name" value="Rubredoxin"/>
    <property type="match status" value="1"/>
</dbReference>
<dbReference type="Gene3D" id="2.20.28.10">
    <property type="match status" value="1"/>
</dbReference>
<dbReference type="InterPro" id="IPR024922">
    <property type="entry name" value="Rubredoxin"/>
</dbReference>
<dbReference type="InterPro" id="IPR024934">
    <property type="entry name" value="Rubredoxin-like_dom"/>
</dbReference>
<dbReference type="InterPro" id="IPR024935">
    <property type="entry name" value="Rubredoxin_dom"/>
</dbReference>
<dbReference type="InterPro" id="IPR050526">
    <property type="entry name" value="Rubredoxin_ET"/>
</dbReference>
<dbReference type="InterPro" id="IPR018527">
    <property type="entry name" value="Rubredoxin_Fe_BS"/>
</dbReference>
<dbReference type="NCBIfam" id="NF045768">
    <property type="entry name" value="RubredRD"/>
    <property type="match status" value="1"/>
</dbReference>
<dbReference type="PANTHER" id="PTHR47627">
    <property type="entry name" value="RUBREDOXIN"/>
    <property type="match status" value="1"/>
</dbReference>
<dbReference type="PANTHER" id="PTHR47627:SF1">
    <property type="entry name" value="RUBREDOXIN-1-RELATED"/>
    <property type="match status" value="1"/>
</dbReference>
<dbReference type="Pfam" id="PF00301">
    <property type="entry name" value="Rubredoxin"/>
    <property type="match status" value="1"/>
</dbReference>
<dbReference type="PIRSF" id="PIRSF000071">
    <property type="entry name" value="Rubredoxin"/>
    <property type="match status" value="1"/>
</dbReference>
<dbReference type="PRINTS" id="PR00163">
    <property type="entry name" value="RUBREDOXIN"/>
</dbReference>
<dbReference type="SUPFAM" id="SSF57802">
    <property type="entry name" value="Rubredoxin-like"/>
    <property type="match status" value="1"/>
</dbReference>
<dbReference type="PROSITE" id="PS00202">
    <property type="entry name" value="RUBREDOXIN"/>
    <property type="match status" value="1"/>
</dbReference>
<dbReference type="PROSITE" id="PS50903">
    <property type="entry name" value="RUBREDOXIN_LIKE"/>
    <property type="match status" value="1"/>
</dbReference>
<evidence type="ECO:0000250" key="1"/>
<evidence type="ECO:0000255" key="2">
    <source>
        <dbReference type="PROSITE-ProRule" id="PRU00241"/>
    </source>
</evidence>
<evidence type="ECO:0000269" key="3">
    <source>
    </source>
</evidence>
<evidence type="ECO:0000305" key="4"/>
<evidence type="ECO:0007829" key="5">
    <source>
        <dbReference type="PDB" id="1YK4"/>
    </source>
</evidence>